<gene>
    <name evidence="1" type="primary">ligA</name>
    <name type="ordered locus">Cla_0673</name>
</gene>
<keyword id="KW-0227">DNA damage</keyword>
<keyword id="KW-0234">DNA repair</keyword>
<keyword id="KW-0235">DNA replication</keyword>
<keyword id="KW-0436">Ligase</keyword>
<keyword id="KW-0460">Magnesium</keyword>
<keyword id="KW-0464">Manganese</keyword>
<keyword id="KW-0479">Metal-binding</keyword>
<keyword id="KW-0520">NAD</keyword>
<keyword id="KW-1185">Reference proteome</keyword>
<keyword id="KW-0862">Zinc</keyword>
<comment type="function">
    <text evidence="1">DNA ligase that catalyzes the formation of phosphodiester linkages between 5'-phosphoryl and 3'-hydroxyl groups in double-stranded DNA using NAD as a coenzyme and as the energy source for the reaction. It is essential for DNA replication and repair of damaged DNA.</text>
</comment>
<comment type="catalytic activity">
    <reaction evidence="1">
        <text>NAD(+) + (deoxyribonucleotide)n-3'-hydroxyl + 5'-phospho-(deoxyribonucleotide)m = (deoxyribonucleotide)n+m + AMP + beta-nicotinamide D-nucleotide.</text>
        <dbReference type="EC" id="6.5.1.2"/>
    </reaction>
</comment>
<comment type="cofactor">
    <cofactor evidence="1">
        <name>Mg(2+)</name>
        <dbReference type="ChEBI" id="CHEBI:18420"/>
    </cofactor>
    <cofactor evidence="1">
        <name>Mn(2+)</name>
        <dbReference type="ChEBI" id="CHEBI:29035"/>
    </cofactor>
</comment>
<comment type="similarity">
    <text evidence="1">Belongs to the NAD-dependent DNA ligase family. LigA subfamily.</text>
</comment>
<accession>B9KG17</accession>
<protein>
    <recommendedName>
        <fullName evidence="1">DNA ligase</fullName>
        <ecNumber evidence="1">6.5.1.2</ecNumber>
    </recommendedName>
    <alternativeName>
        <fullName evidence="1">Polydeoxyribonucleotide synthase [NAD(+)]</fullName>
    </alternativeName>
</protein>
<evidence type="ECO:0000255" key="1">
    <source>
        <dbReference type="HAMAP-Rule" id="MF_01588"/>
    </source>
</evidence>
<dbReference type="EC" id="6.5.1.2" evidence="1"/>
<dbReference type="EMBL" id="CP000932">
    <property type="protein sequence ID" value="ACM64002.1"/>
    <property type="molecule type" value="Genomic_DNA"/>
</dbReference>
<dbReference type="RefSeq" id="WP_012661385.1">
    <property type="nucleotide sequence ID" value="NC_012039.1"/>
</dbReference>
<dbReference type="SMR" id="B9KG17"/>
<dbReference type="STRING" id="306263.Cla_0673"/>
<dbReference type="KEGG" id="cla:CLA_0673"/>
<dbReference type="PATRIC" id="fig|306263.5.peg.653"/>
<dbReference type="eggNOG" id="COG0272">
    <property type="taxonomic scope" value="Bacteria"/>
</dbReference>
<dbReference type="HOGENOM" id="CLU_007764_2_1_7"/>
<dbReference type="Proteomes" id="UP000007727">
    <property type="component" value="Chromosome"/>
</dbReference>
<dbReference type="GO" id="GO:0005829">
    <property type="term" value="C:cytosol"/>
    <property type="evidence" value="ECO:0007669"/>
    <property type="project" value="TreeGrafter"/>
</dbReference>
<dbReference type="GO" id="GO:0003677">
    <property type="term" value="F:DNA binding"/>
    <property type="evidence" value="ECO:0007669"/>
    <property type="project" value="InterPro"/>
</dbReference>
<dbReference type="GO" id="GO:0003911">
    <property type="term" value="F:DNA ligase (NAD+) activity"/>
    <property type="evidence" value="ECO:0007669"/>
    <property type="project" value="UniProtKB-UniRule"/>
</dbReference>
<dbReference type="GO" id="GO:0046872">
    <property type="term" value="F:metal ion binding"/>
    <property type="evidence" value="ECO:0007669"/>
    <property type="project" value="UniProtKB-KW"/>
</dbReference>
<dbReference type="GO" id="GO:0006281">
    <property type="term" value="P:DNA repair"/>
    <property type="evidence" value="ECO:0007669"/>
    <property type="project" value="UniProtKB-KW"/>
</dbReference>
<dbReference type="GO" id="GO:0006260">
    <property type="term" value="P:DNA replication"/>
    <property type="evidence" value="ECO:0007669"/>
    <property type="project" value="UniProtKB-KW"/>
</dbReference>
<dbReference type="CDD" id="cd17748">
    <property type="entry name" value="BRCT_DNA_ligase_like"/>
    <property type="match status" value="1"/>
</dbReference>
<dbReference type="CDD" id="cd00114">
    <property type="entry name" value="LIGANc"/>
    <property type="match status" value="1"/>
</dbReference>
<dbReference type="FunFam" id="1.10.150.20:FF:000007">
    <property type="entry name" value="DNA ligase"/>
    <property type="match status" value="1"/>
</dbReference>
<dbReference type="FunFam" id="2.40.50.140:FF:000012">
    <property type="entry name" value="DNA ligase"/>
    <property type="match status" value="1"/>
</dbReference>
<dbReference type="Gene3D" id="1.10.150.20">
    <property type="entry name" value="5' to 3' exonuclease, C-terminal subdomain"/>
    <property type="match status" value="2"/>
</dbReference>
<dbReference type="Gene3D" id="3.40.50.10190">
    <property type="entry name" value="BRCT domain"/>
    <property type="match status" value="1"/>
</dbReference>
<dbReference type="Gene3D" id="3.30.470.30">
    <property type="entry name" value="DNA ligase/mRNA capping enzyme"/>
    <property type="match status" value="1"/>
</dbReference>
<dbReference type="Gene3D" id="1.10.287.610">
    <property type="entry name" value="Helix hairpin bin"/>
    <property type="match status" value="1"/>
</dbReference>
<dbReference type="Gene3D" id="2.40.50.140">
    <property type="entry name" value="Nucleic acid-binding proteins"/>
    <property type="match status" value="1"/>
</dbReference>
<dbReference type="HAMAP" id="MF_01588">
    <property type="entry name" value="DNA_ligase_A"/>
    <property type="match status" value="1"/>
</dbReference>
<dbReference type="InterPro" id="IPR001357">
    <property type="entry name" value="BRCT_dom"/>
</dbReference>
<dbReference type="InterPro" id="IPR036420">
    <property type="entry name" value="BRCT_dom_sf"/>
</dbReference>
<dbReference type="InterPro" id="IPR041663">
    <property type="entry name" value="DisA/LigA_HHH"/>
</dbReference>
<dbReference type="InterPro" id="IPR001679">
    <property type="entry name" value="DNA_ligase"/>
</dbReference>
<dbReference type="InterPro" id="IPR018239">
    <property type="entry name" value="DNA_ligase_AS"/>
</dbReference>
<dbReference type="InterPro" id="IPR033136">
    <property type="entry name" value="DNA_ligase_CS"/>
</dbReference>
<dbReference type="InterPro" id="IPR013839">
    <property type="entry name" value="DNAligase_adenylation"/>
</dbReference>
<dbReference type="InterPro" id="IPR013840">
    <property type="entry name" value="DNAligase_N"/>
</dbReference>
<dbReference type="InterPro" id="IPR003583">
    <property type="entry name" value="Hlx-hairpin-Hlx_DNA-bd_motif"/>
</dbReference>
<dbReference type="InterPro" id="IPR012340">
    <property type="entry name" value="NA-bd_OB-fold"/>
</dbReference>
<dbReference type="InterPro" id="IPR004150">
    <property type="entry name" value="NAD_DNA_ligase_OB"/>
</dbReference>
<dbReference type="InterPro" id="IPR010994">
    <property type="entry name" value="RuvA_2-like"/>
</dbReference>
<dbReference type="NCBIfam" id="TIGR00575">
    <property type="entry name" value="dnlj"/>
    <property type="match status" value="1"/>
</dbReference>
<dbReference type="NCBIfam" id="NF005932">
    <property type="entry name" value="PRK07956.1"/>
    <property type="match status" value="1"/>
</dbReference>
<dbReference type="PANTHER" id="PTHR23389">
    <property type="entry name" value="CHROMOSOME TRANSMISSION FIDELITY FACTOR 18"/>
    <property type="match status" value="1"/>
</dbReference>
<dbReference type="PANTHER" id="PTHR23389:SF9">
    <property type="entry name" value="DNA LIGASE"/>
    <property type="match status" value="1"/>
</dbReference>
<dbReference type="Pfam" id="PF00533">
    <property type="entry name" value="BRCT"/>
    <property type="match status" value="1"/>
</dbReference>
<dbReference type="Pfam" id="PF01653">
    <property type="entry name" value="DNA_ligase_aden"/>
    <property type="match status" value="1"/>
</dbReference>
<dbReference type="Pfam" id="PF03120">
    <property type="entry name" value="DNA_ligase_OB"/>
    <property type="match status" value="1"/>
</dbReference>
<dbReference type="Pfam" id="PF12826">
    <property type="entry name" value="HHH_2"/>
    <property type="match status" value="1"/>
</dbReference>
<dbReference type="PIRSF" id="PIRSF001604">
    <property type="entry name" value="LigA"/>
    <property type="match status" value="1"/>
</dbReference>
<dbReference type="SMART" id="SM00292">
    <property type="entry name" value="BRCT"/>
    <property type="match status" value="1"/>
</dbReference>
<dbReference type="SMART" id="SM00278">
    <property type="entry name" value="HhH1"/>
    <property type="match status" value="4"/>
</dbReference>
<dbReference type="SMART" id="SM00532">
    <property type="entry name" value="LIGANc"/>
    <property type="match status" value="1"/>
</dbReference>
<dbReference type="SUPFAM" id="SSF52113">
    <property type="entry name" value="BRCT domain"/>
    <property type="match status" value="1"/>
</dbReference>
<dbReference type="SUPFAM" id="SSF56091">
    <property type="entry name" value="DNA ligase/mRNA capping enzyme, catalytic domain"/>
    <property type="match status" value="1"/>
</dbReference>
<dbReference type="SUPFAM" id="SSF50249">
    <property type="entry name" value="Nucleic acid-binding proteins"/>
    <property type="match status" value="1"/>
</dbReference>
<dbReference type="SUPFAM" id="SSF47781">
    <property type="entry name" value="RuvA domain 2-like"/>
    <property type="match status" value="1"/>
</dbReference>
<dbReference type="PROSITE" id="PS50172">
    <property type="entry name" value="BRCT"/>
    <property type="match status" value="1"/>
</dbReference>
<dbReference type="PROSITE" id="PS01055">
    <property type="entry name" value="DNA_LIGASE_N1"/>
    <property type="match status" value="1"/>
</dbReference>
<dbReference type="PROSITE" id="PS01056">
    <property type="entry name" value="DNA_LIGASE_N2"/>
    <property type="match status" value="1"/>
</dbReference>
<reference key="1">
    <citation type="journal article" date="2008" name="Foodborne Pathog. Dis.">
        <title>The complete genome sequence and analysis of the human pathogen Campylobacter lari.</title>
        <authorList>
            <person name="Miller W.G."/>
            <person name="Wang G."/>
            <person name="Binnewies T.T."/>
            <person name="Parker C.T."/>
        </authorList>
    </citation>
    <scope>NUCLEOTIDE SEQUENCE [LARGE SCALE GENOMIC DNA]</scope>
    <source>
        <strain>RM2100 / D67 / ATCC BAA-1060</strain>
    </source>
</reference>
<feature type="chain" id="PRO_0000380328" description="DNA ligase">
    <location>
        <begin position="1"/>
        <end position="651"/>
    </location>
</feature>
<feature type="domain" description="BRCT" evidence="1">
    <location>
        <begin position="570"/>
        <end position="651"/>
    </location>
</feature>
<feature type="active site" description="N6-AMP-lysine intermediate" evidence="1">
    <location>
        <position position="107"/>
    </location>
</feature>
<feature type="binding site" evidence="1">
    <location>
        <begin position="30"/>
        <end position="34"/>
    </location>
    <ligand>
        <name>NAD(+)</name>
        <dbReference type="ChEBI" id="CHEBI:57540"/>
    </ligand>
</feature>
<feature type="binding site" evidence="1">
    <location>
        <begin position="79"/>
        <end position="80"/>
    </location>
    <ligand>
        <name>NAD(+)</name>
        <dbReference type="ChEBI" id="CHEBI:57540"/>
    </ligand>
</feature>
<feature type="binding site" evidence="1">
    <location>
        <position position="105"/>
    </location>
    <ligand>
        <name>NAD(+)</name>
        <dbReference type="ChEBI" id="CHEBI:57540"/>
    </ligand>
</feature>
<feature type="binding site" evidence="1">
    <location>
        <position position="128"/>
    </location>
    <ligand>
        <name>NAD(+)</name>
        <dbReference type="ChEBI" id="CHEBI:57540"/>
    </ligand>
</feature>
<feature type="binding site" evidence="1">
    <location>
        <position position="162"/>
    </location>
    <ligand>
        <name>NAD(+)</name>
        <dbReference type="ChEBI" id="CHEBI:57540"/>
    </ligand>
</feature>
<feature type="binding site" evidence="1">
    <location>
        <position position="301"/>
    </location>
    <ligand>
        <name>NAD(+)</name>
        <dbReference type="ChEBI" id="CHEBI:57540"/>
    </ligand>
</feature>
<feature type="binding site" evidence="1">
    <location>
        <position position="395"/>
    </location>
    <ligand>
        <name>Zn(2+)</name>
        <dbReference type="ChEBI" id="CHEBI:29105"/>
    </ligand>
</feature>
<feature type="binding site" evidence="1">
    <location>
        <position position="398"/>
    </location>
    <ligand>
        <name>Zn(2+)</name>
        <dbReference type="ChEBI" id="CHEBI:29105"/>
    </ligand>
</feature>
<feature type="binding site" evidence="1">
    <location>
        <position position="411"/>
    </location>
    <ligand>
        <name>Zn(2+)</name>
        <dbReference type="ChEBI" id="CHEBI:29105"/>
    </ligand>
</feature>
<feature type="binding site" evidence="1">
    <location>
        <position position="416"/>
    </location>
    <ligand>
        <name>Zn(2+)</name>
        <dbReference type="ChEBI" id="CHEBI:29105"/>
    </ligand>
</feature>
<organism>
    <name type="scientific">Campylobacter lari (strain RM2100 / D67 / ATCC BAA-1060)</name>
    <dbReference type="NCBI Taxonomy" id="306263"/>
    <lineage>
        <taxon>Bacteria</taxon>
        <taxon>Pseudomonadati</taxon>
        <taxon>Campylobacterota</taxon>
        <taxon>Epsilonproteobacteria</taxon>
        <taxon>Campylobacterales</taxon>
        <taxon>Campylobacteraceae</taxon>
        <taxon>Campylobacter</taxon>
    </lineage>
</organism>
<sequence length="651" mass="74049">MTYQEYLEKVKLAKEWMRAYYEDDEPLASDEEYDKLIRELKEFEALYKDKISKDSPTQNIAPTIQSEFHKITHSAKMWSMEDVFDEAELRAWAKRAKCEFDFFIEPKFDGASLNLTYENGKLISGATRGDGEIGEDITLNVKEISNIPKIIPYKDKIEIRGEVVILKEDFEKINEKRAKDGLSLFANPRNGASGSLRQLDTSITKERNLKFYPWGVGENSLKFSKHSEVMEFIRSLGFLKDDFVYCVKTLDEVLEKYHELLEKRDQKPMMMDGMVVRVDDLKKCQELGYTVKFPKFMAAFKFPALEKTTTLLGVNLQVGRSGVITPVAILEPVELDGVVVKSATLHNFDEITRLGVMIGDSVSVIRSGDVIPKITKVFTQRRDGLESKITKPSLCPECLSELLDEGAFLKCQNLDCKARLVNSIIYFVSKKCLNIDGLGENIVELLFKEGKITNIESIFFLKYDDFLNLEGFKEKKINNLLNAIENAKKCSLSRFITALGIEHIGEVAAKKLAQSFGFDWFLQSYEAYVNLEGFGEQMAKSLQEFTKINHQRIKHFYEILHLEDEKKELALNENISNKTFVITGTLSKSRDHFKELIESFGAKVSSSVSKKTDFVLYGSEAGSKLEKAQSLGVKCINEDEFNALLGGDDEV</sequence>
<name>DNLJ_CAMLR</name>
<proteinExistence type="inferred from homology"/>